<name>DNHB_NOCS1</name>
<proteinExistence type="evidence at protein level"/>
<gene>
    <name evidence="2" type="primary">dnhB</name>
</gene>
<accession>A0A096ZED0</accession>
<keyword id="KW-0903">Direct protein sequencing</keyword>
<keyword id="KW-0378">Hydrolase</keyword>
<organism>
    <name type="scientific">Nocardioides sp. (strain JS1661)</name>
    <dbReference type="NCBI Taxonomy" id="1517491"/>
    <lineage>
        <taxon>Bacteria</taxon>
        <taxon>Bacillati</taxon>
        <taxon>Actinomycetota</taxon>
        <taxon>Actinomycetes</taxon>
        <taxon>Propionibacteriales</taxon>
        <taxon>Nocardioidaceae</taxon>
        <taxon>Nocardioides</taxon>
    </lineage>
</organism>
<protein>
    <recommendedName>
        <fullName evidence="2">2,4-dinitroanisole O-demethylase subunit beta</fullName>
        <shortName evidence="2">DNAN hydrolase subunit beta</shortName>
        <shortName evidence="2">DNHB</shortName>
        <ecNumber evidence="1">3.3.2.14</ecNumber>
    </recommendedName>
</protein>
<dbReference type="EC" id="3.3.2.14" evidence="1"/>
<dbReference type="EMBL" id="KM213001">
    <property type="protein sequence ID" value="AIQ77709.1"/>
    <property type="molecule type" value="Genomic_DNA"/>
</dbReference>
<dbReference type="SMR" id="A0A096ZED0"/>
<dbReference type="KEGG" id="ag:AIQ77709"/>
<dbReference type="BioCyc" id="MetaCyc:MONOMER-19135"/>
<dbReference type="BRENDA" id="3.3.2.14">
    <property type="organism ID" value="4363"/>
</dbReference>
<dbReference type="GO" id="GO:0016803">
    <property type="term" value="F:ether hydrolase activity"/>
    <property type="evidence" value="ECO:0000314"/>
    <property type="project" value="UniProtKB"/>
</dbReference>
<dbReference type="GO" id="GO:0008270">
    <property type="term" value="F:zinc ion binding"/>
    <property type="evidence" value="ECO:0000250"/>
    <property type="project" value="UniProtKB"/>
</dbReference>
<dbReference type="FunFam" id="3.60.15.10:FF:000073">
    <property type="entry name" value="MBL fold metallo-hydrolase"/>
    <property type="match status" value="1"/>
</dbReference>
<dbReference type="Gene3D" id="3.60.15.10">
    <property type="entry name" value="Ribonuclease Z/Hydroxyacylglutathione hydrolase-like"/>
    <property type="match status" value="1"/>
</dbReference>
<dbReference type="InterPro" id="IPR036866">
    <property type="entry name" value="RibonucZ/Hydroxyglut_hydro"/>
</dbReference>
<dbReference type="SUPFAM" id="SSF56281">
    <property type="entry name" value="Metallo-hydrolase/oxidoreductase"/>
    <property type="match status" value="1"/>
</dbReference>
<sequence length="318" mass="35021">MTGRQRTTVVAPDRPVQDATISQLTTRVWTVAIDGYRTIVVEGETGIVAINSFGTPSAQTKYRELITQTFGDKPVVAVVASIDHLDHTGRLGPFANGAEVIGHELGQAIAFGRGLPEQKLADTVVTGPVTEIERAGVRLVLRYPAPTVGTGNLAVDLPDDDVVFMVGLQSGARYGIFPDFHFKHFLRATSEIAALGRRYFVPGRSEVMDAGQVRQALEYVNDFQNACQRCLAGGEVPHWLLEPTTAYLHDELSSKWSHLEGYDPVAVGLGGLRVVCHYYMGGWWLDDTDHHELLYDHLTVRTYREYRERLATAGTGRA</sequence>
<comment type="function">
    <text evidence="1">Involved in the degradation of 2,4-dinitroanisole (DNAN), an insensitive munition ingredient used in explosive formulations as a replacement for 2,4,6-trinitrotoluene (TNT). Catalyzes the removal of the methyl group from 2,4-dinitroanisole (DNAN) to yield 2,4-dinitrophenol (2,4-DNP) and methanol.</text>
</comment>
<comment type="catalytic activity">
    <reaction evidence="1">
        <text>2,4-dinitroanisole + H2O = 2,4-dinitrophenol + methanol + H(+)</text>
        <dbReference type="Rhea" id="RHEA:44636"/>
        <dbReference type="ChEBI" id="CHEBI:15377"/>
        <dbReference type="ChEBI" id="CHEBI:15378"/>
        <dbReference type="ChEBI" id="CHEBI:17790"/>
        <dbReference type="ChEBI" id="CHEBI:84559"/>
        <dbReference type="ChEBI" id="CHEBI:84561"/>
        <dbReference type="EC" id="3.3.2.14"/>
    </reaction>
</comment>
<comment type="subunit">
    <text evidence="4">Part of the complex DnhAB composed of the 2,4-dinitroanisole O-demethylase alpha (DnhA) and beta (DnhB) subunits.</text>
</comment>
<comment type="induction">
    <text evidence="1">Constitutively expressed.</text>
</comment>
<comment type="miscellaneous">
    <text evidence="1">Unlike other known O-demethylases, it does not require oxygen or electron donors.</text>
</comment>
<comment type="similarity">
    <text evidence="3">Belongs to the metallo-beta-lactamase superfamily.</text>
</comment>
<evidence type="ECO:0000269" key="1">
    <source>
    </source>
</evidence>
<evidence type="ECO:0000303" key="2">
    <source>
    </source>
</evidence>
<evidence type="ECO:0000305" key="3"/>
<evidence type="ECO:0000305" key="4">
    <source>
    </source>
</evidence>
<feature type="initiator methionine" description="Removed" evidence="1">
    <location>
        <position position="1"/>
    </location>
</feature>
<feature type="chain" id="PRO_0000435989" description="2,4-dinitroanisole O-demethylase subunit beta">
    <location>
        <begin position="2"/>
        <end position="318"/>
    </location>
</feature>
<reference key="1">
    <citation type="journal article" date="2014" name="Appl. Environ. Microbiol.">
        <title>Aerobic biodegradation of 2,4-dinitroanisole by Nocardioides sp. strain JS1661.</title>
        <authorList>
            <person name="Fida T.T."/>
            <person name="Palamuru S."/>
            <person name="Pandey G."/>
            <person name="Spain J.C."/>
        </authorList>
    </citation>
    <scope>NUCLEOTIDE SEQUENCE [GENOMIC DNA]</scope>
    <scope>PROTEIN SEQUENCE OF 2-7</scope>
    <scope>FUNCTION</scope>
    <scope>CATALYTIC ACTIVITY</scope>
    <scope>INDUCTION</scope>
    <scope>SUBUNIT</scope>
    <source>
        <strain>JS1661</strain>
    </source>
</reference>